<accession>A4WU16</accession>
<comment type="function">
    <text evidence="1">Catalyzes the phosphorylation of pantothenate (Pan), the first step in CoA biosynthesis.</text>
</comment>
<comment type="catalytic activity">
    <reaction evidence="1">
        <text>(R)-pantothenate + ATP = (R)-4'-phosphopantothenate + ADP + H(+)</text>
        <dbReference type="Rhea" id="RHEA:16373"/>
        <dbReference type="ChEBI" id="CHEBI:10986"/>
        <dbReference type="ChEBI" id="CHEBI:15378"/>
        <dbReference type="ChEBI" id="CHEBI:29032"/>
        <dbReference type="ChEBI" id="CHEBI:30616"/>
        <dbReference type="ChEBI" id="CHEBI:456216"/>
        <dbReference type="EC" id="2.7.1.33"/>
    </reaction>
</comment>
<comment type="cofactor">
    <cofactor evidence="1">
        <name>NH4(+)</name>
        <dbReference type="ChEBI" id="CHEBI:28938"/>
    </cofactor>
    <cofactor evidence="1">
        <name>K(+)</name>
        <dbReference type="ChEBI" id="CHEBI:29103"/>
    </cofactor>
    <text evidence="1">A monovalent cation. Ammonium or potassium.</text>
</comment>
<comment type="pathway">
    <text evidence="1">Cofactor biosynthesis; coenzyme A biosynthesis; CoA from (R)-pantothenate: step 1/5.</text>
</comment>
<comment type="subunit">
    <text evidence="1">Homodimer.</text>
</comment>
<comment type="subcellular location">
    <subcellularLocation>
        <location evidence="1">Cytoplasm</location>
    </subcellularLocation>
</comment>
<comment type="similarity">
    <text evidence="1">Belongs to the type III pantothenate kinase family.</text>
</comment>
<reference key="1">
    <citation type="submission" date="2007-04" db="EMBL/GenBank/DDBJ databases">
        <title>Complete sequence of chromosome of Rhodobacter sphaeroides ATCC 17025.</title>
        <authorList>
            <consortium name="US DOE Joint Genome Institute"/>
            <person name="Copeland A."/>
            <person name="Lucas S."/>
            <person name="Lapidus A."/>
            <person name="Barry K."/>
            <person name="Detter J.C."/>
            <person name="Glavina del Rio T."/>
            <person name="Hammon N."/>
            <person name="Israni S."/>
            <person name="Dalin E."/>
            <person name="Tice H."/>
            <person name="Pitluck S."/>
            <person name="Chertkov O."/>
            <person name="Brettin T."/>
            <person name="Bruce D."/>
            <person name="Han C."/>
            <person name="Schmutz J."/>
            <person name="Larimer F."/>
            <person name="Land M."/>
            <person name="Hauser L."/>
            <person name="Kyrpides N."/>
            <person name="Kim E."/>
            <person name="Richardson P."/>
            <person name="Mackenzie C."/>
            <person name="Choudhary M."/>
            <person name="Donohue T.J."/>
            <person name="Kaplan S."/>
        </authorList>
    </citation>
    <scope>NUCLEOTIDE SEQUENCE [LARGE SCALE GENOMIC DNA]</scope>
    <source>
        <strain>ATCC 17025 / ATH 2.4.3</strain>
    </source>
</reference>
<organism>
    <name type="scientific">Cereibacter sphaeroides (strain ATCC 17025 / ATH 2.4.3)</name>
    <name type="common">Rhodobacter sphaeroides</name>
    <dbReference type="NCBI Taxonomy" id="349102"/>
    <lineage>
        <taxon>Bacteria</taxon>
        <taxon>Pseudomonadati</taxon>
        <taxon>Pseudomonadota</taxon>
        <taxon>Alphaproteobacteria</taxon>
        <taxon>Rhodobacterales</taxon>
        <taxon>Paracoccaceae</taxon>
        <taxon>Cereibacter</taxon>
    </lineage>
</organism>
<evidence type="ECO:0000255" key="1">
    <source>
        <dbReference type="HAMAP-Rule" id="MF_01274"/>
    </source>
</evidence>
<dbReference type="EC" id="2.7.1.33" evidence="1"/>
<dbReference type="EMBL" id="CP000661">
    <property type="protein sequence ID" value="ABP70880.1"/>
    <property type="molecule type" value="Genomic_DNA"/>
</dbReference>
<dbReference type="SMR" id="A4WU16"/>
<dbReference type="STRING" id="349102.Rsph17025_1989"/>
<dbReference type="KEGG" id="rsq:Rsph17025_1989"/>
<dbReference type="eggNOG" id="COG1521">
    <property type="taxonomic scope" value="Bacteria"/>
</dbReference>
<dbReference type="HOGENOM" id="CLU_066627_1_0_5"/>
<dbReference type="BioCyc" id="RSPH349102:G1G8M-2055-MONOMER"/>
<dbReference type="UniPathway" id="UPA00241">
    <property type="reaction ID" value="UER00352"/>
</dbReference>
<dbReference type="GO" id="GO:0005737">
    <property type="term" value="C:cytoplasm"/>
    <property type="evidence" value="ECO:0007669"/>
    <property type="project" value="UniProtKB-SubCell"/>
</dbReference>
<dbReference type="GO" id="GO:0005524">
    <property type="term" value="F:ATP binding"/>
    <property type="evidence" value="ECO:0007669"/>
    <property type="project" value="UniProtKB-UniRule"/>
</dbReference>
<dbReference type="GO" id="GO:0046872">
    <property type="term" value="F:metal ion binding"/>
    <property type="evidence" value="ECO:0007669"/>
    <property type="project" value="UniProtKB-KW"/>
</dbReference>
<dbReference type="GO" id="GO:0004594">
    <property type="term" value="F:pantothenate kinase activity"/>
    <property type="evidence" value="ECO:0007669"/>
    <property type="project" value="UniProtKB-UniRule"/>
</dbReference>
<dbReference type="GO" id="GO:0015937">
    <property type="term" value="P:coenzyme A biosynthetic process"/>
    <property type="evidence" value="ECO:0007669"/>
    <property type="project" value="UniProtKB-UniRule"/>
</dbReference>
<dbReference type="CDD" id="cd24015">
    <property type="entry name" value="ASKHA_NBD_PanK-III"/>
    <property type="match status" value="1"/>
</dbReference>
<dbReference type="Gene3D" id="3.30.420.40">
    <property type="match status" value="2"/>
</dbReference>
<dbReference type="HAMAP" id="MF_01274">
    <property type="entry name" value="Pantothen_kinase_3"/>
    <property type="match status" value="1"/>
</dbReference>
<dbReference type="InterPro" id="IPR043129">
    <property type="entry name" value="ATPase_NBD"/>
</dbReference>
<dbReference type="InterPro" id="IPR004619">
    <property type="entry name" value="Type_III_PanK"/>
</dbReference>
<dbReference type="NCBIfam" id="TIGR00671">
    <property type="entry name" value="baf"/>
    <property type="match status" value="1"/>
</dbReference>
<dbReference type="NCBIfam" id="NF009844">
    <property type="entry name" value="PRK13318.1-2"/>
    <property type="match status" value="1"/>
</dbReference>
<dbReference type="NCBIfam" id="NF009848">
    <property type="entry name" value="PRK13318.1-6"/>
    <property type="match status" value="1"/>
</dbReference>
<dbReference type="NCBIfam" id="NF009855">
    <property type="entry name" value="PRK13321.1"/>
    <property type="match status" value="1"/>
</dbReference>
<dbReference type="PANTHER" id="PTHR34265">
    <property type="entry name" value="TYPE III PANTOTHENATE KINASE"/>
    <property type="match status" value="1"/>
</dbReference>
<dbReference type="PANTHER" id="PTHR34265:SF1">
    <property type="entry name" value="TYPE III PANTOTHENATE KINASE"/>
    <property type="match status" value="1"/>
</dbReference>
<dbReference type="Pfam" id="PF03309">
    <property type="entry name" value="Pan_kinase"/>
    <property type="match status" value="1"/>
</dbReference>
<dbReference type="SUPFAM" id="SSF53067">
    <property type="entry name" value="Actin-like ATPase domain"/>
    <property type="match status" value="2"/>
</dbReference>
<proteinExistence type="inferred from homology"/>
<protein>
    <recommendedName>
        <fullName evidence="1">Type III pantothenate kinase</fullName>
        <ecNumber evidence="1">2.7.1.33</ecNumber>
    </recommendedName>
    <alternativeName>
        <fullName evidence="1">PanK-III</fullName>
    </alternativeName>
    <alternativeName>
        <fullName evidence="1">Pantothenic acid kinase</fullName>
    </alternativeName>
</protein>
<sequence length="257" mass="28105">MLLAIDCGNTNTVFSIWDGTQFLATWRIATDHKRTADEYHVWLSTLLSLTRIEARITEAVISSTVPRVVFNLRVLCNRYYDCRPLVVGKPECRLPVAPRVDQGTTVGPDRLVNTVAGYHLHGGNLIVVDFGTATTFDVVDADGAYIGGVIAPGVNLSLEALHMAAAALPHVDVTKPPHAIGTNTVACIQSGVYWGYIGLVEGIVRQIRLERHAPMKVIATGGLAPLFDQGFDLFDKVEDDLTMQGLVLIHQYNKELE</sequence>
<gene>
    <name evidence="1" type="primary">coaX</name>
    <name type="ordered locus">Rsph17025_1989</name>
</gene>
<keyword id="KW-0067">ATP-binding</keyword>
<keyword id="KW-0173">Coenzyme A biosynthesis</keyword>
<keyword id="KW-0963">Cytoplasm</keyword>
<keyword id="KW-0418">Kinase</keyword>
<keyword id="KW-0479">Metal-binding</keyword>
<keyword id="KW-0547">Nucleotide-binding</keyword>
<keyword id="KW-0630">Potassium</keyword>
<keyword id="KW-0808">Transferase</keyword>
<name>COAX_CERS5</name>
<feature type="chain" id="PRO_1000054407" description="Type III pantothenate kinase">
    <location>
        <begin position="1"/>
        <end position="257"/>
    </location>
</feature>
<feature type="active site" description="Proton acceptor" evidence="1">
    <location>
        <position position="109"/>
    </location>
</feature>
<feature type="binding site" evidence="1">
    <location>
        <begin position="6"/>
        <end position="13"/>
    </location>
    <ligand>
        <name>ATP</name>
        <dbReference type="ChEBI" id="CHEBI:30616"/>
    </ligand>
</feature>
<feature type="binding site" evidence="1">
    <location>
        <begin position="107"/>
        <end position="110"/>
    </location>
    <ligand>
        <name>substrate</name>
    </ligand>
</feature>
<feature type="binding site" evidence="1">
    <location>
        <position position="129"/>
    </location>
    <ligand>
        <name>K(+)</name>
        <dbReference type="ChEBI" id="CHEBI:29103"/>
    </ligand>
</feature>
<feature type="binding site" evidence="1">
    <location>
        <position position="132"/>
    </location>
    <ligand>
        <name>ATP</name>
        <dbReference type="ChEBI" id="CHEBI:30616"/>
    </ligand>
</feature>
<feature type="binding site" evidence="1">
    <location>
        <position position="184"/>
    </location>
    <ligand>
        <name>substrate</name>
    </ligand>
</feature>